<reference key="1">
    <citation type="journal article" date="1997" name="Endocrinology">
        <title>Two novel members of the prolactin/growth hormone family are expressed in the mouse placenta.</title>
        <authorList>
            <person name="Lin J."/>
            <person name="Poole J."/>
            <person name="Linzer D.I."/>
        </authorList>
    </citation>
    <scope>NUCLEOTIDE SEQUENCE [MRNA] (ISOFORM 2)</scope>
    <source>
        <strain>C57BL/6J</strain>
    </source>
</reference>
<reference key="2">
    <citation type="journal article" date="1998" name="Biochim. Biophys. Acta">
        <title>Identification of two new members of the mouse prolactin gene family.</title>
        <authorList>
            <person name="Mueller H."/>
            <person name="Orwig K.E."/>
            <person name="Soares M.J."/>
        </authorList>
    </citation>
    <scope>NUCLEOTIDE SEQUENCE [MRNA] (ISOFORM 1)</scope>
</reference>
<reference key="3">
    <citation type="journal article" date="2005" name="Science">
        <title>The transcriptional landscape of the mammalian genome.</title>
        <authorList>
            <person name="Carninci P."/>
            <person name="Kasukawa T."/>
            <person name="Katayama S."/>
            <person name="Gough J."/>
            <person name="Frith M.C."/>
            <person name="Maeda N."/>
            <person name="Oyama R."/>
            <person name="Ravasi T."/>
            <person name="Lenhard B."/>
            <person name="Wells C."/>
            <person name="Kodzius R."/>
            <person name="Shimokawa K."/>
            <person name="Bajic V.B."/>
            <person name="Brenner S.E."/>
            <person name="Batalov S."/>
            <person name="Forrest A.R."/>
            <person name="Zavolan M."/>
            <person name="Davis M.J."/>
            <person name="Wilming L.G."/>
            <person name="Aidinis V."/>
            <person name="Allen J.E."/>
            <person name="Ambesi-Impiombato A."/>
            <person name="Apweiler R."/>
            <person name="Aturaliya R.N."/>
            <person name="Bailey T.L."/>
            <person name="Bansal M."/>
            <person name="Baxter L."/>
            <person name="Beisel K.W."/>
            <person name="Bersano T."/>
            <person name="Bono H."/>
            <person name="Chalk A.M."/>
            <person name="Chiu K.P."/>
            <person name="Choudhary V."/>
            <person name="Christoffels A."/>
            <person name="Clutterbuck D.R."/>
            <person name="Crowe M.L."/>
            <person name="Dalla E."/>
            <person name="Dalrymple B.P."/>
            <person name="de Bono B."/>
            <person name="Della Gatta G."/>
            <person name="di Bernardo D."/>
            <person name="Down T."/>
            <person name="Engstrom P."/>
            <person name="Fagiolini M."/>
            <person name="Faulkner G."/>
            <person name="Fletcher C.F."/>
            <person name="Fukushima T."/>
            <person name="Furuno M."/>
            <person name="Futaki S."/>
            <person name="Gariboldi M."/>
            <person name="Georgii-Hemming P."/>
            <person name="Gingeras T.R."/>
            <person name="Gojobori T."/>
            <person name="Green R.E."/>
            <person name="Gustincich S."/>
            <person name="Harbers M."/>
            <person name="Hayashi Y."/>
            <person name="Hensch T.K."/>
            <person name="Hirokawa N."/>
            <person name="Hill D."/>
            <person name="Huminiecki L."/>
            <person name="Iacono M."/>
            <person name="Ikeo K."/>
            <person name="Iwama A."/>
            <person name="Ishikawa T."/>
            <person name="Jakt M."/>
            <person name="Kanapin A."/>
            <person name="Katoh M."/>
            <person name="Kawasawa Y."/>
            <person name="Kelso J."/>
            <person name="Kitamura H."/>
            <person name="Kitano H."/>
            <person name="Kollias G."/>
            <person name="Krishnan S.P."/>
            <person name="Kruger A."/>
            <person name="Kummerfeld S.K."/>
            <person name="Kurochkin I.V."/>
            <person name="Lareau L.F."/>
            <person name="Lazarevic D."/>
            <person name="Lipovich L."/>
            <person name="Liu J."/>
            <person name="Liuni S."/>
            <person name="McWilliam S."/>
            <person name="Madan Babu M."/>
            <person name="Madera M."/>
            <person name="Marchionni L."/>
            <person name="Matsuda H."/>
            <person name="Matsuzawa S."/>
            <person name="Miki H."/>
            <person name="Mignone F."/>
            <person name="Miyake S."/>
            <person name="Morris K."/>
            <person name="Mottagui-Tabar S."/>
            <person name="Mulder N."/>
            <person name="Nakano N."/>
            <person name="Nakauchi H."/>
            <person name="Ng P."/>
            <person name="Nilsson R."/>
            <person name="Nishiguchi S."/>
            <person name="Nishikawa S."/>
            <person name="Nori F."/>
            <person name="Ohara O."/>
            <person name="Okazaki Y."/>
            <person name="Orlando V."/>
            <person name="Pang K.C."/>
            <person name="Pavan W.J."/>
            <person name="Pavesi G."/>
            <person name="Pesole G."/>
            <person name="Petrovsky N."/>
            <person name="Piazza S."/>
            <person name="Reed J."/>
            <person name="Reid J.F."/>
            <person name="Ring B.Z."/>
            <person name="Ringwald M."/>
            <person name="Rost B."/>
            <person name="Ruan Y."/>
            <person name="Salzberg S.L."/>
            <person name="Sandelin A."/>
            <person name="Schneider C."/>
            <person name="Schoenbach C."/>
            <person name="Sekiguchi K."/>
            <person name="Semple C.A."/>
            <person name="Seno S."/>
            <person name="Sessa L."/>
            <person name="Sheng Y."/>
            <person name="Shibata Y."/>
            <person name="Shimada H."/>
            <person name="Shimada K."/>
            <person name="Silva D."/>
            <person name="Sinclair B."/>
            <person name="Sperling S."/>
            <person name="Stupka E."/>
            <person name="Sugiura K."/>
            <person name="Sultana R."/>
            <person name="Takenaka Y."/>
            <person name="Taki K."/>
            <person name="Tammoja K."/>
            <person name="Tan S.L."/>
            <person name="Tang S."/>
            <person name="Taylor M.S."/>
            <person name="Tegner J."/>
            <person name="Teichmann S.A."/>
            <person name="Ueda H.R."/>
            <person name="van Nimwegen E."/>
            <person name="Verardo R."/>
            <person name="Wei C.L."/>
            <person name="Yagi K."/>
            <person name="Yamanishi H."/>
            <person name="Zabarovsky E."/>
            <person name="Zhu S."/>
            <person name="Zimmer A."/>
            <person name="Hide W."/>
            <person name="Bult C."/>
            <person name="Grimmond S.M."/>
            <person name="Teasdale R.D."/>
            <person name="Liu E.T."/>
            <person name="Brusic V."/>
            <person name="Quackenbush J."/>
            <person name="Wahlestedt C."/>
            <person name="Mattick J.S."/>
            <person name="Hume D.A."/>
            <person name="Kai C."/>
            <person name="Sasaki D."/>
            <person name="Tomaru Y."/>
            <person name="Fukuda S."/>
            <person name="Kanamori-Katayama M."/>
            <person name="Suzuki M."/>
            <person name="Aoki J."/>
            <person name="Arakawa T."/>
            <person name="Iida J."/>
            <person name="Imamura K."/>
            <person name="Itoh M."/>
            <person name="Kato T."/>
            <person name="Kawaji H."/>
            <person name="Kawagashira N."/>
            <person name="Kawashima T."/>
            <person name="Kojima M."/>
            <person name="Kondo S."/>
            <person name="Konno H."/>
            <person name="Nakano K."/>
            <person name="Ninomiya N."/>
            <person name="Nishio T."/>
            <person name="Okada M."/>
            <person name="Plessy C."/>
            <person name="Shibata K."/>
            <person name="Shiraki T."/>
            <person name="Suzuki S."/>
            <person name="Tagami M."/>
            <person name="Waki K."/>
            <person name="Watahiki A."/>
            <person name="Okamura-Oho Y."/>
            <person name="Suzuki H."/>
            <person name="Kawai J."/>
            <person name="Hayashizaki Y."/>
        </authorList>
    </citation>
    <scope>NUCLEOTIDE SEQUENCE [LARGE SCALE MRNA] (ISOFORM 1)</scope>
    <source>
        <strain>C57BL/6J</strain>
    </source>
</reference>
<reference key="4">
    <citation type="journal article" date="2009" name="PLoS Biol.">
        <title>Lineage-specific biology revealed by a finished genome assembly of the mouse.</title>
        <authorList>
            <person name="Church D.M."/>
            <person name="Goodstadt L."/>
            <person name="Hillier L.W."/>
            <person name="Zody M.C."/>
            <person name="Goldstein S."/>
            <person name="She X."/>
            <person name="Bult C.J."/>
            <person name="Agarwala R."/>
            <person name="Cherry J.L."/>
            <person name="DiCuccio M."/>
            <person name="Hlavina W."/>
            <person name="Kapustin Y."/>
            <person name="Meric P."/>
            <person name="Maglott D."/>
            <person name="Birtle Z."/>
            <person name="Marques A.C."/>
            <person name="Graves T."/>
            <person name="Zhou S."/>
            <person name="Teague B."/>
            <person name="Potamousis K."/>
            <person name="Churas C."/>
            <person name="Place M."/>
            <person name="Herschleb J."/>
            <person name="Runnheim R."/>
            <person name="Forrest D."/>
            <person name="Amos-Landgraf J."/>
            <person name="Schwartz D.C."/>
            <person name="Cheng Z."/>
            <person name="Lindblad-Toh K."/>
            <person name="Eichler E.E."/>
            <person name="Ponting C.P."/>
        </authorList>
    </citation>
    <scope>NUCLEOTIDE SEQUENCE [LARGE SCALE GENOMIC DNA]</scope>
    <source>
        <strain>C57BL/6J</strain>
    </source>
</reference>
<reference key="5">
    <citation type="journal article" date="2004" name="Genome Res.">
        <title>The status, quality, and expansion of the NIH full-length cDNA project: the Mammalian Gene Collection (MGC).</title>
        <authorList>
            <consortium name="The MGC Project Team"/>
        </authorList>
    </citation>
    <scope>NUCLEOTIDE SEQUENCE [LARGE SCALE MRNA] (ISOFORM 2)</scope>
    <source>
        <strain>C57BL/6J</strain>
        <tissue>Embryo</tissue>
    </source>
</reference>
<evidence type="ECO:0000250" key="1"/>
<evidence type="ECO:0000255" key="2"/>
<evidence type="ECO:0000303" key="3">
    <source>
    </source>
</evidence>
<evidence type="ECO:0000303" key="4">
    <source>
    </source>
</evidence>
<evidence type="ECO:0000305" key="5"/>
<organism>
    <name type="scientific">Mus musculus</name>
    <name type="common">Mouse</name>
    <dbReference type="NCBI Taxonomy" id="10090"/>
    <lineage>
        <taxon>Eukaryota</taxon>
        <taxon>Metazoa</taxon>
        <taxon>Chordata</taxon>
        <taxon>Craniata</taxon>
        <taxon>Vertebrata</taxon>
        <taxon>Euteleostomi</taxon>
        <taxon>Mammalia</taxon>
        <taxon>Eutheria</taxon>
        <taxon>Euarchontoglires</taxon>
        <taxon>Glires</taxon>
        <taxon>Rodentia</taxon>
        <taxon>Myomorpha</taxon>
        <taxon>Muroidea</taxon>
        <taxon>Muridae</taxon>
        <taxon>Murinae</taxon>
        <taxon>Mus</taxon>
        <taxon>Mus</taxon>
    </lineage>
</organism>
<name>PR7A1_MOUSE</name>
<accession>O54830</accession>
<accession>O35334</accession>
<accession>Q80X21</accession>
<comment type="subcellular location">
    <subcellularLocation>
        <location evidence="1">Secreted</location>
    </subcellularLocation>
</comment>
<comment type="alternative products">
    <event type="alternative splicing"/>
    <isoform>
        <id>O54830-1</id>
        <name>1</name>
        <sequence type="displayed"/>
    </isoform>
    <isoform>
        <id>O54830-2</id>
        <name>2</name>
        <sequence type="described" ref="VSP_016678"/>
    </isoform>
</comment>
<comment type="tissue specificity">
    <text>Expressed specifically in the placenta. Detected only in the trophoblast giant cells.</text>
</comment>
<comment type="developmental stage">
    <text>Highest expression at mid-pregnancy.</text>
</comment>
<comment type="similarity">
    <text evidence="5">Belongs to the somatotropin/prolactin family.</text>
</comment>
<sequence>MPLSFTQPCSSGALLLLVVSNLLLWENVACLPLSSNDTDDDPLSIKGLLDHAMILSKNITDLNMELRRIFTISEMSAKLIDKFLSSSSSSDSYDQFMLEFLGQQELLTKNLTYCHKYSIKVPEDIEEAQNVISLEDFPILILSRMQAWNETLKNRINLSEGTPGIDDDILPIYKNIETKIAELLEDSKSILSQAYGATENVADYTLWSGLEDLQSSDEETRFLALCKLSYCLHVDIHTANFYLQFLRCVALVNSDSCLSSKTGNDS</sequence>
<proteinExistence type="evidence at transcript level"/>
<feature type="signal peptide" evidence="2">
    <location>
        <begin position="1"/>
        <end position="30"/>
    </location>
</feature>
<feature type="chain" id="PRO_0000045211" description="Prolactin-7A1">
    <location>
        <begin position="31"/>
        <end position="266"/>
    </location>
</feature>
<feature type="glycosylation site" description="N-linked (GlcNAc...) asparagine" evidence="2">
    <location>
        <position position="36"/>
    </location>
</feature>
<feature type="glycosylation site" description="N-linked (GlcNAc...) asparagine" evidence="2">
    <location>
        <position position="58"/>
    </location>
</feature>
<feature type="glycosylation site" description="N-linked (GlcNAc...) asparagine" evidence="2">
    <location>
        <position position="110"/>
    </location>
</feature>
<feature type="glycosylation site" description="N-linked (GlcNAc...) asparagine" evidence="2">
    <location>
        <position position="149"/>
    </location>
</feature>
<feature type="glycosylation site" description="N-linked (GlcNAc...) asparagine" evidence="2">
    <location>
        <position position="157"/>
    </location>
</feature>
<feature type="disulfide bond" evidence="1">
    <location>
        <begin position="114"/>
        <end position="231"/>
    </location>
</feature>
<feature type="disulfide bond" evidence="1">
    <location>
        <begin position="248"/>
        <end position="257"/>
    </location>
</feature>
<feature type="splice variant" id="VSP_016678" description="In isoform 2." evidence="3 4">
    <original>SG</original>
    <variation>W</variation>
    <location>
        <begin position="11"/>
        <end position="12"/>
    </location>
</feature>
<feature type="sequence conflict" description="In Ref. 5; AAH51671." evidence="5" ref="5">
    <original>N</original>
    <variation>S</variation>
    <location>
        <position position="58"/>
    </location>
</feature>
<feature type="sequence conflict" description="In Ref. 5; AAH51671." evidence="5" ref="5">
    <original>L</original>
    <variation>F</variation>
    <location>
        <position position="213"/>
    </location>
</feature>
<dbReference type="EMBL" id="AF011381">
    <property type="protein sequence ID" value="AAB92397.1"/>
    <property type="molecule type" value="mRNA"/>
</dbReference>
<dbReference type="EMBL" id="AF020525">
    <property type="protein sequence ID" value="AAB80729.1"/>
    <property type="molecule type" value="mRNA"/>
</dbReference>
<dbReference type="EMBL" id="AK141309">
    <property type="protein sequence ID" value="BAE24644.1"/>
    <property type="molecule type" value="mRNA"/>
</dbReference>
<dbReference type="EMBL" id="AL590522">
    <property type="protein sequence ID" value="CAI23986.1"/>
    <property type="molecule type" value="Genomic_DNA"/>
</dbReference>
<dbReference type="EMBL" id="AL590522">
    <property type="protein sequence ID" value="CAI23985.1"/>
    <property type="molecule type" value="Genomic_DNA"/>
</dbReference>
<dbReference type="EMBL" id="BC051671">
    <property type="protein sequence ID" value="AAH51671.1"/>
    <property type="molecule type" value="mRNA"/>
</dbReference>
<dbReference type="CCDS" id="CCDS26403.1">
    <molecule id="O54830-2"/>
</dbReference>
<dbReference type="CCDS" id="CCDS49224.1">
    <molecule id="O54830-1"/>
</dbReference>
<dbReference type="RefSeq" id="NP_001157530.1">
    <molecule id="O54830-1"/>
    <property type="nucleotide sequence ID" value="NM_001164058.1"/>
</dbReference>
<dbReference type="RefSeq" id="NP_032956.1">
    <molecule id="O54830-2"/>
    <property type="nucleotide sequence ID" value="NM_008930.2"/>
</dbReference>
<dbReference type="SMR" id="O54830"/>
<dbReference type="FunCoup" id="O54830">
    <property type="interactions" value="52"/>
</dbReference>
<dbReference type="STRING" id="10090.ENSMUSP00000093614"/>
<dbReference type="GlyCosmos" id="O54830">
    <property type="glycosylation" value="5 sites, No reported glycans"/>
</dbReference>
<dbReference type="GlyGen" id="O54830">
    <property type="glycosylation" value="5 sites"/>
</dbReference>
<dbReference type="PaxDb" id="10090-ENSMUSP00000093614"/>
<dbReference type="DNASU" id="19113"/>
<dbReference type="Ensembl" id="ENSMUST00000006659.8">
    <molecule id="O54830-2"/>
    <property type="protein sequence ID" value="ENSMUSP00000006659.7"/>
    <property type="gene ID" value="ENSMUSG00000006488.18"/>
</dbReference>
<dbReference type="Ensembl" id="ENSMUST00000095924.11">
    <molecule id="O54830-1"/>
    <property type="protein sequence ID" value="ENSMUSP00000093614.4"/>
    <property type="gene ID" value="ENSMUSG00000006488.18"/>
</dbReference>
<dbReference type="GeneID" id="19113"/>
<dbReference type="KEGG" id="mmu:19113"/>
<dbReference type="UCSC" id="uc007pxy.2">
    <molecule id="O54830-2"/>
    <property type="organism name" value="mouse"/>
</dbReference>
<dbReference type="UCSC" id="uc007pxz.2">
    <molecule id="O54830-1"/>
    <property type="organism name" value="mouse"/>
</dbReference>
<dbReference type="AGR" id="MGI:1206572"/>
<dbReference type="CTD" id="19113"/>
<dbReference type="MGI" id="MGI:1206572">
    <property type="gene designation" value="Prl7a1"/>
</dbReference>
<dbReference type="VEuPathDB" id="HostDB:ENSMUSG00000006488"/>
<dbReference type="eggNOG" id="ENOG502QYU3">
    <property type="taxonomic scope" value="Eukaryota"/>
</dbReference>
<dbReference type="GeneTree" id="ENSGT00950000182818"/>
<dbReference type="HOGENOM" id="CLU_088274_0_1_1"/>
<dbReference type="InParanoid" id="O54830"/>
<dbReference type="OMA" id="VNSDICK"/>
<dbReference type="OrthoDB" id="9629831at2759"/>
<dbReference type="PhylomeDB" id="O54830"/>
<dbReference type="TreeFam" id="TF332592"/>
<dbReference type="BioGRID-ORCS" id="19113">
    <property type="hits" value="1 hit in 77 CRISPR screens"/>
</dbReference>
<dbReference type="PRO" id="PR:O54830"/>
<dbReference type="Proteomes" id="UP000000589">
    <property type="component" value="Chromosome 13"/>
</dbReference>
<dbReference type="RNAct" id="O54830">
    <property type="molecule type" value="protein"/>
</dbReference>
<dbReference type="Bgee" id="ENSMUSG00000006488">
    <property type="expression patterns" value="Expressed in ectoplacental cone and 11 other cell types or tissues"/>
</dbReference>
<dbReference type="ExpressionAtlas" id="O54830">
    <property type="expression patterns" value="baseline and differential"/>
</dbReference>
<dbReference type="GO" id="GO:0005576">
    <property type="term" value="C:extracellular region"/>
    <property type="evidence" value="ECO:0007669"/>
    <property type="project" value="UniProtKB-SubCell"/>
</dbReference>
<dbReference type="GO" id="GO:0005179">
    <property type="term" value="F:hormone activity"/>
    <property type="evidence" value="ECO:0007669"/>
    <property type="project" value="UniProtKB-KW"/>
</dbReference>
<dbReference type="CDD" id="cd10288">
    <property type="entry name" value="prolactin_like"/>
    <property type="match status" value="1"/>
</dbReference>
<dbReference type="FunFam" id="1.20.1250.10:FF:000041">
    <property type="entry name" value="Growth hormone d20"/>
    <property type="match status" value="1"/>
</dbReference>
<dbReference type="Gene3D" id="1.20.1250.10">
    <property type="match status" value="1"/>
</dbReference>
<dbReference type="InterPro" id="IPR009079">
    <property type="entry name" value="4_helix_cytokine-like_core"/>
</dbReference>
<dbReference type="InterPro" id="IPR001400">
    <property type="entry name" value="Somatotropin/Prolactin"/>
</dbReference>
<dbReference type="InterPro" id="IPR018116">
    <property type="entry name" value="Somatotropin_CS"/>
</dbReference>
<dbReference type="PANTHER" id="PTHR11417:SF73">
    <property type="entry name" value="PROLACTIN-7A1"/>
    <property type="match status" value="1"/>
</dbReference>
<dbReference type="PANTHER" id="PTHR11417">
    <property type="entry name" value="SOMATOTROPIN,PROLACTIN"/>
    <property type="match status" value="1"/>
</dbReference>
<dbReference type="Pfam" id="PF00103">
    <property type="entry name" value="Hormone_1"/>
    <property type="match status" value="1"/>
</dbReference>
<dbReference type="SUPFAM" id="SSF47266">
    <property type="entry name" value="4-helical cytokines"/>
    <property type="match status" value="1"/>
</dbReference>
<dbReference type="PROSITE" id="PS00338">
    <property type="entry name" value="SOMATOTROPIN_2"/>
    <property type="match status" value="1"/>
</dbReference>
<keyword id="KW-0025">Alternative splicing</keyword>
<keyword id="KW-1015">Disulfide bond</keyword>
<keyword id="KW-0325">Glycoprotein</keyword>
<keyword id="KW-0372">Hormone</keyword>
<keyword id="KW-1185">Reference proteome</keyword>
<keyword id="KW-0964">Secreted</keyword>
<keyword id="KW-0732">Signal</keyword>
<gene>
    <name type="primary">Prl7a1</name>
    <name type="synonym">Prlpe</name>
    <name type="synonym">Prlpg</name>
</gene>
<protein>
    <recommendedName>
        <fullName>Prolactin-7A1</fullName>
    </recommendedName>
    <alternativeName>
        <fullName>Placental prolactin-like protein E</fullName>
        <shortName>PLP-E</shortName>
        <shortName>PRL-like protein E</shortName>
    </alternativeName>
    <alternativeName>
        <fullName>Placental prolactin-like protein G</fullName>
        <shortName>PLP-G</shortName>
        <shortName>PRL-like protein G</shortName>
    </alternativeName>
</protein>